<dbReference type="EMBL" id="AF088912">
    <property type="protein sequence ID" value="AAD13389.1"/>
    <property type="molecule type" value="mRNA"/>
</dbReference>
<dbReference type="SMR" id="O82528"/>
<dbReference type="GO" id="GO:0022625">
    <property type="term" value="C:cytosolic large ribosomal subunit"/>
    <property type="evidence" value="ECO:0007669"/>
    <property type="project" value="TreeGrafter"/>
</dbReference>
<dbReference type="GO" id="GO:0003729">
    <property type="term" value="F:mRNA binding"/>
    <property type="evidence" value="ECO:0007669"/>
    <property type="project" value="UniProtKB-ARBA"/>
</dbReference>
<dbReference type="GO" id="GO:0003735">
    <property type="term" value="F:structural constituent of ribosome"/>
    <property type="evidence" value="ECO:0007669"/>
    <property type="project" value="InterPro"/>
</dbReference>
<dbReference type="GO" id="GO:0002181">
    <property type="term" value="P:cytoplasmic translation"/>
    <property type="evidence" value="ECO:0007669"/>
    <property type="project" value="TreeGrafter"/>
</dbReference>
<dbReference type="FunFam" id="3.40.1120.10:FF:000001">
    <property type="entry name" value="Ribosomal protein L15"/>
    <property type="match status" value="1"/>
</dbReference>
<dbReference type="Gene3D" id="3.40.1120.10">
    <property type="entry name" value="Ribosomal protein l15e"/>
    <property type="match status" value="1"/>
</dbReference>
<dbReference type="InterPro" id="IPR024794">
    <property type="entry name" value="Rbsml_eL15_core_dom_sf"/>
</dbReference>
<dbReference type="InterPro" id="IPR000439">
    <property type="entry name" value="Ribosomal_eL15"/>
</dbReference>
<dbReference type="InterPro" id="IPR020925">
    <property type="entry name" value="Ribosomal_eL15_CS"/>
</dbReference>
<dbReference type="InterPro" id="IPR012678">
    <property type="entry name" value="Ribosomal_uL23/eL15/eS24_sf"/>
</dbReference>
<dbReference type="NCBIfam" id="NF003269">
    <property type="entry name" value="PRK04243.1"/>
    <property type="match status" value="1"/>
</dbReference>
<dbReference type="PANTHER" id="PTHR11847:SF4">
    <property type="entry name" value="LARGE RIBOSOMAL SUBUNIT PROTEIN EL15"/>
    <property type="match status" value="1"/>
</dbReference>
<dbReference type="PANTHER" id="PTHR11847">
    <property type="entry name" value="RIBOSOMAL PROTEIN L15"/>
    <property type="match status" value="1"/>
</dbReference>
<dbReference type="Pfam" id="PF00827">
    <property type="entry name" value="Ribosomal_L15e"/>
    <property type="match status" value="1"/>
</dbReference>
<dbReference type="SMART" id="SM01384">
    <property type="entry name" value="Ribosomal_L15e"/>
    <property type="match status" value="1"/>
</dbReference>
<dbReference type="SUPFAM" id="SSF54189">
    <property type="entry name" value="Ribosomal proteins S24e, L23 and L15e"/>
    <property type="match status" value="1"/>
</dbReference>
<dbReference type="PROSITE" id="PS01194">
    <property type="entry name" value="RIBOSOMAL_L15E"/>
    <property type="match status" value="1"/>
</dbReference>
<comment type="similarity">
    <text evidence="2">Belongs to the eukaryotic ribosomal protein eL15 family.</text>
</comment>
<organism>
    <name type="scientific">Petunia hybrida</name>
    <name type="common">Petunia</name>
    <dbReference type="NCBI Taxonomy" id="4102"/>
    <lineage>
        <taxon>Eukaryota</taxon>
        <taxon>Viridiplantae</taxon>
        <taxon>Streptophyta</taxon>
        <taxon>Embryophyta</taxon>
        <taxon>Tracheophyta</taxon>
        <taxon>Spermatophyta</taxon>
        <taxon>Magnoliopsida</taxon>
        <taxon>eudicotyledons</taxon>
        <taxon>Gunneridae</taxon>
        <taxon>Pentapetalae</taxon>
        <taxon>asterids</taxon>
        <taxon>lamiids</taxon>
        <taxon>Solanales</taxon>
        <taxon>Solanaceae</taxon>
        <taxon>Petunioideae</taxon>
        <taxon>Petunia</taxon>
    </lineage>
</organism>
<protein>
    <recommendedName>
        <fullName evidence="2">Large ribosomal subunit protein eL15</fullName>
    </recommendedName>
    <alternativeName>
        <fullName>60S ribosomal protein L15</fullName>
    </alternativeName>
</protein>
<feature type="chain" id="PRO_0000127560" description="Large ribosomal subunit protein eL15">
    <location>
        <begin position="1"/>
        <end position="204"/>
    </location>
</feature>
<feature type="region of interest" description="Disordered" evidence="1">
    <location>
        <begin position="172"/>
        <end position="204"/>
    </location>
</feature>
<feature type="compositionally biased region" description="Basic residues" evidence="1">
    <location>
        <begin position="172"/>
        <end position="182"/>
    </location>
</feature>
<feature type="compositionally biased region" description="Polar residues" evidence="1">
    <location>
        <begin position="193"/>
        <end position="204"/>
    </location>
</feature>
<reference key="1">
    <citation type="submission" date="1998-09" db="EMBL/GenBank/DDBJ databases">
        <authorList>
            <person name="Lee H.S."/>
            <person name="Moon J.H."/>
            <person name="Kim S.G."/>
        </authorList>
    </citation>
    <scope>NUCLEOTIDE SEQUENCE [MRNA]</scope>
</reference>
<gene>
    <name type="primary">RPL15</name>
</gene>
<accession>O82528</accession>
<proteinExistence type="evidence at transcript level"/>
<name>RL15_PETHY</name>
<evidence type="ECO:0000256" key="1">
    <source>
        <dbReference type="SAM" id="MobiDB-lite"/>
    </source>
</evidence>
<evidence type="ECO:0000305" key="2"/>
<sequence>MGAYTYVSELWRKKQSDVMRFLQRVRCWEYRQLPSIVRVTRPTRPDKARRLGYKAKQGYVVYRVRVKRGGRKRPVPKGIVYGKPTNQGVTQLKFQRTKRSVAEERAGRKLGGLRVLNSYWINEDSTYKYFEVILVDQAHAAIRNDPRINWICNPVHKHRELRGLTSAGKKYRGLRGRGHLHNKAPPSRRANWKRNQTLSLPRYR</sequence>
<keyword id="KW-0687">Ribonucleoprotein</keyword>
<keyword id="KW-0689">Ribosomal protein</keyword>